<keyword id="KW-1003">Cell membrane</keyword>
<keyword id="KW-0963">Cytoplasm</keyword>
<keyword id="KW-0903">Direct protein sequencing</keyword>
<keyword id="KW-0472">Membrane</keyword>
<keyword id="KW-0597">Phosphoprotein</keyword>
<keyword id="KW-1185">Reference proteome</keyword>
<feature type="chain" id="PRO_0000050286" description="GRB2-associated-binding protein 2">
    <location>
        <begin position="1"/>
        <end position="665"/>
    </location>
</feature>
<feature type="domain" description="PH" evidence="3">
    <location>
        <begin position="8"/>
        <end position="119"/>
    </location>
</feature>
<feature type="region of interest" description="Disordered" evidence="4">
    <location>
        <begin position="131"/>
        <end position="184"/>
    </location>
</feature>
<feature type="region of interest" description="Disordered" evidence="4">
    <location>
        <begin position="338"/>
        <end position="396"/>
    </location>
</feature>
<feature type="region of interest" description="Disordered" evidence="4">
    <location>
        <begin position="408"/>
        <end position="445"/>
    </location>
</feature>
<feature type="region of interest" description="Disordered" evidence="4">
    <location>
        <begin position="491"/>
        <end position="517"/>
    </location>
</feature>
<feature type="region of interest" description="Disordered" evidence="4">
    <location>
        <begin position="548"/>
        <end position="632"/>
    </location>
</feature>
<feature type="region of interest" description="Disordered" evidence="4">
    <location>
        <begin position="646"/>
        <end position="665"/>
    </location>
</feature>
<feature type="short sequence motif" description="SH3-binding" evidence="1">
    <location>
        <begin position="348"/>
        <end position="355"/>
    </location>
</feature>
<feature type="short sequence motif" description="SH3-binding" evidence="1">
    <location>
        <begin position="499"/>
        <end position="508"/>
    </location>
</feature>
<feature type="compositionally biased region" description="Polar residues" evidence="4">
    <location>
        <begin position="160"/>
        <end position="170"/>
    </location>
</feature>
<feature type="compositionally biased region" description="Polar residues" evidence="4">
    <location>
        <begin position="357"/>
        <end position="379"/>
    </location>
</feature>
<feature type="compositionally biased region" description="Polar residues" evidence="4">
    <location>
        <begin position="430"/>
        <end position="439"/>
    </location>
</feature>
<feature type="compositionally biased region" description="Polar residues" evidence="4">
    <location>
        <begin position="548"/>
        <end position="566"/>
    </location>
</feature>
<feature type="compositionally biased region" description="Polar residues" evidence="4">
    <location>
        <begin position="578"/>
        <end position="600"/>
    </location>
</feature>
<feature type="compositionally biased region" description="Polar residues" evidence="4">
    <location>
        <begin position="646"/>
        <end position="659"/>
    </location>
</feature>
<feature type="modified residue" description="Phosphoserine" evidence="2">
    <location>
        <position position="2"/>
    </location>
</feature>
<feature type="modified residue" description="Phosphoserine" evidence="2">
    <location>
        <position position="135"/>
    </location>
</feature>
<feature type="modified residue" description="Phosphoserine" evidence="2">
    <location>
        <position position="142"/>
    </location>
</feature>
<feature type="modified residue" description="Phosphoserine" evidence="2">
    <location>
        <position position="143"/>
    </location>
</feature>
<feature type="modified residue" description="Phosphoserine" evidence="2">
    <location>
        <position position="149"/>
    </location>
</feature>
<feature type="modified residue" description="Phosphoserine" evidence="2">
    <location>
        <position position="150"/>
    </location>
</feature>
<feature type="modified residue" description="Phosphoserine" evidence="2">
    <location>
        <position position="160"/>
    </location>
</feature>
<feature type="modified residue" description="Phosphoserine" evidence="2">
    <location>
        <position position="165"/>
    </location>
</feature>
<feature type="modified residue" description="Phosphoserine" evidence="10">
    <location>
        <position position="211"/>
    </location>
</feature>
<feature type="modified residue" description="Phosphoserine" evidence="2">
    <location>
        <position position="220"/>
    </location>
</feature>
<feature type="modified residue" description="Phosphoserine" evidence="14">
    <location>
        <position position="261"/>
    </location>
</feature>
<feature type="modified residue" description="Phosphothreonine" evidence="14">
    <location>
        <position position="262"/>
    </location>
</feature>
<feature type="modified residue" description="Phosphotyrosine" evidence="14">
    <location>
        <position position="263"/>
    </location>
</feature>
<feature type="modified residue" description="Phosphothreonine" evidence="2">
    <location>
        <position position="275"/>
    </location>
</feature>
<feature type="modified residue" description="Phosphoserine" evidence="2">
    <location>
        <position position="278"/>
    </location>
</feature>
<feature type="modified residue" description="Phosphoserine" evidence="2">
    <location>
        <position position="282"/>
    </location>
</feature>
<feature type="modified residue" description="Phosphothreonine" evidence="2">
    <location>
        <position position="284"/>
    </location>
</feature>
<feature type="modified residue" description="Phosphotyrosine" evidence="14">
    <location>
        <position position="290"/>
    </location>
</feature>
<feature type="modified residue" description="Phosphothreonine" evidence="2">
    <location>
        <position position="328"/>
    </location>
</feature>
<feature type="modified residue" description="Phosphoserine" evidence="2">
    <location>
        <position position="365"/>
    </location>
</feature>
<feature type="modified residue" description="Phosphothreonine" evidence="2">
    <location>
        <position position="382"/>
    </location>
</feature>
<feature type="modified residue" description="Phosphothreonine" evidence="10">
    <location>
        <position position="388"/>
    </location>
</feature>
<feature type="modified residue" description="Phosphoserine" evidence="2">
    <location>
        <position position="402"/>
    </location>
</feature>
<feature type="modified residue" description="Phosphothreonine" evidence="15">
    <location>
        <position position="405"/>
    </location>
</feature>
<feature type="modified residue" description="Phosphoserine" evidence="2">
    <location>
        <position position="420"/>
    </location>
</feature>
<feature type="modified residue" description="Phosphotyrosine" evidence="7">
    <location>
        <position position="441"/>
    </location>
</feature>
<feature type="modified residue" description="Phosphoserine" evidence="2">
    <location>
        <position position="469"/>
    </location>
</feature>
<feature type="modified residue" description="Phosphoserine" evidence="2">
    <location>
        <position position="532"/>
    </location>
</feature>
<feature type="modified residue" description="Phosphoserine" evidence="2">
    <location>
        <position position="612"/>
    </location>
</feature>
<feature type="modified residue" description="Phosphotyrosine" evidence="2">
    <location>
        <position position="632"/>
    </location>
</feature>
<feature type="mutagenesis site" description="Impairs EGF-induced phosphorylation at S-211 and T-388 and binding to phosphatidylinositol 3,4,5-trisphosphate and phosphatidylinositol 3,4-bisphosphate." evidence="8 10">
    <original>R</original>
    <variation>C</variation>
    <location>
        <position position="32"/>
    </location>
</feature>
<feature type="sequence conflict" description="In Ref. 1; AAD05166." evidence="13" ref="1">
    <original>N</original>
    <variation>NS</variation>
    <location>
        <position position="542"/>
    </location>
</feature>
<sequence length="665" mass="73208">MSGGGGDDVVCTGWLRKSPPEKKLRRYAWKKRWFILRSGRMSGDPDVLEYYKNEHSKKPLRIINLNLCEQVDAGLTFNKKELQDSFVFDIKTSERTFYLVAETEADMNKWVQSICQICGFNQAEESTDSLRNLSSASHGPRSSPAEFSSSQHLLRERKSSAPSHSSQPTLFTFEPPVSSHMQPTLSTSAPQEYLYLHQCISRRTENARSASFSQGTRQKSDTAVQKLAQSNGHCINGVGGQVHGFYSLPKPSRHNTEFKDSTYDLPRSLASHGHTKSSLTGSETDNEDVYTFKMPSNTLCRELGDLLVDNMDVPTTPLSAYQIPRTFTLDKNHNAMTVATPGDSAIAPPPRPPKPSQAETSQWGSIQQRPPISENSRSVAATIPRRNTLPAMDNSRLHRASSCETYEYPARGSGESASWSAEPPGKTAVGRSNSASSDDNYVPMNPGSSTLLAMERPGDNSQSVYIPMSPGPHHFDPLGYPSTALPIHRGPSRGSEIQPPPVNRNLKPDRKAKPTPLDLRNNTVIDELPFKSPVTKSWSRINHTFNSSSSQYCRPISTQSITSTDSGDSEENYVPMQNPVSASPVPSGTNSPAPKKSTGSVDYLALDFQPGSPSPHRKPSTSSVTSDEKVDYVQVDKEKTQALQNTMQEWTDVRQSSEPSKGAKL</sequence>
<reference key="1">
    <citation type="journal article" date="1998" name="Mol. Cell">
        <title>Cloning of p97/Gab2, the major SHP2-binding protein in hematopoietic cells, reveals a novel pathway for cytokine-induced gene activation.</title>
        <authorList>
            <person name="Gu H."/>
            <person name="Pratt J.C."/>
            <person name="Burakoff S.J."/>
            <person name="Neel B.G."/>
        </authorList>
    </citation>
    <scope>NUCLEOTIDE SEQUENCE [MRNA]</scope>
    <scope>PROTEIN SEQUENCE OF 2-5; 81-91; 251-270; 277-293; 512-529; 630-635 AND 640-648</scope>
    <scope>FUNCTION</scope>
    <scope>PHOSPHORYLATION</scope>
    <scope>INTERACTION WITH GRB2; PTPN11 AND SHC1</scope>
    <scope>TISSUE SPECIFICITY</scope>
</reference>
<reference key="2">
    <citation type="journal article" date="1999" name="Blood">
        <title>Gab-family adapter proteins act downstream of cytokine and growth factor receptors and T- and B-cell antigen receptors.</title>
        <authorList>
            <person name="Nishida K."/>
            <person name="Yoshida Y."/>
            <person name="Itoh M."/>
            <person name="Fukada T."/>
            <person name="Ohtani T."/>
            <person name="Shirogane T."/>
            <person name="Atsumi T."/>
            <person name="Takahashi-Tezuka M."/>
            <person name="Ishihara K."/>
            <person name="Hibi M."/>
            <person name="Hirano T."/>
        </authorList>
    </citation>
    <scope>NUCLEOTIDE SEQUENCE [MRNA]</scope>
    <scope>FUNCTION</scope>
    <scope>TISSUE SPECIFICITY</scope>
    <scope>PHOSPHORYLATION</scope>
    <scope>DEPHOSPHORYLATION BY PTPN11</scope>
    <scope>INTERACTION WITH GRB2; PTPN11 AND PI-3 KINASE</scope>
</reference>
<reference key="3">
    <citation type="journal article" date="2001" name="Nature">
        <title>Essential role for Gab2 in the allergic response.</title>
        <authorList>
            <person name="Gu H."/>
            <person name="Saito K."/>
            <person name="Klaman L.D."/>
            <person name="Shen J."/>
            <person name="Fleming T."/>
            <person name="Wang Y."/>
            <person name="Pratt J.C."/>
            <person name="Lin G."/>
            <person name="Lim B."/>
            <person name="Kinet J.-P."/>
            <person name="Neel B.G."/>
        </authorList>
    </citation>
    <scope>FUNCTION</scope>
    <scope>DISRUPTION PHENOTYPE</scope>
</reference>
<reference key="4">
    <citation type="journal article" date="2005" name="Nat. Med.">
        <title>The molecular scaffold Gab2 is a crucial component of RANK signaling and osteoclastogenesis.</title>
        <authorList>
            <person name="Wada T."/>
            <person name="Nakashima T."/>
            <person name="Oliveira-dos-Santos A.J."/>
            <person name="Gasser J."/>
            <person name="Hara H."/>
            <person name="Schett G."/>
            <person name="Penninger J.M."/>
        </authorList>
    </citation>
    <scope>FUNCTION</scope>
    <scope>DISRUPTION PHENOTYPE</scope>
    <scope>INTERACTION WITH TNFRSF11A</scope>
    <scope>PHOSPHORYLATION AT TYR-441</scope>
</reference>
<reference key="5">
    <citation type="journal article" date="2006" name="J. Immunol.">
        <title>Scaffolding adapter Grb2-associated binder 2 requires Syk to transmit signals from FcepsilonRI.</title>
        <authorList>
            <person name="Yu M."/>
            <person name="Lowell C.A."/>
            <person name="Neel B.G."/>
            <person name="Gu H."/>
        </authorList>
    </citation>
    <scope>INTERACTION WITH SYK</scope>
    <scope>LIPID-BINDING</scope>
    <scope>MUTAGENESIS OF ARG-32</scope>
</reference>
<reference key="6">
    <citation type="journal article" date="2007" name="Blood">
        <title>Abnormal hematopoiesis in Gab2 mutant mice.</title>
        <authorList>
            <person name="Zhang Y."/>
            <person name="Diaz-Flores E."/>
            <person name="Li G."/>
            <person name="Wang Z."/>
            <person name="Kang Z."/>
            <person name="Haviernikova E."/>
            <person name="Rowe S."/>
            <person name="Qu C.-K."/>
            <person name="Tse W."/>
            <person name="Shannon K.M."/>
            <person name="Bunting K.D."/>
        </authorList>
    </citation>
    <scope>FUNCTION</scope>
</reference>
<reference key="7">
    <citation type="journal article" date="2007" name="J. Immunol.">
        <title>Quantitative time-resolved phosphoproteomic analysis of mast cell signaling.</title>
        <authorList>
            <person name="Cao L."/>
            <person name="Yu K."/>
            <person name="Banh C."/>
            <person name="Nguyen V."/>
            <person name="Ritz A."/>
            <person name="Raphael B.J."/>
            <person name="Kawakami Y."/>
            <person name="Kawakami T."/>
            <person name="Salomon A.R."/>
        </authorList>
    </citation>
    <scope>PHOSPHORYLATION [LARGE SCALE ANALYSIS] AT SER-261; THR-262; TYR-263 AND TYR-290</scope>
    <scope>IDENTIFICATION BY MASS SPECTROMETRY [LARGE SCALE ANALYSIS]</scope>
    <source>
        <tissue>Mast cell</tissue>
    </source>
</reference>
<reference key="8">
    <citation type="journal article" date="2008" name="EMBO J.">
        <title>Phosphorylation-dependent binding of 14-3-3 terminates signalling by the Gab2 docking protein.</title>
        <authorList>
            <person name="Brummer T."/>
            <person name="Larance M."/>
            <person name="Herrera Abreu M.T."/>
            <person name="Lyons R.J."/>
            <person name="Timpson P."/>
            <person name="Emmerich C.H."/>
            <person name="Fleuren E.D.G."/>
            <person name="Lehrbach G.M."/>
            <person name="Schramek D."/>
            <person name="Guilhaus M."/>
            <person name="James D.E."/>
            <person name="Daly R.J."/>
        </authorList>
    </citation>
    <scope>MUTAGENESIS OF ARG-32</scope>
    <scope>PHOSPHORYLATION AT SER-211 AND THR-388</scope>
</reference>
<reference key="9">
    <citation type="journal article" date="2010" name="Cell">
        <title>A tissue-specific atlas of mouse protein phosphorylation and expression.</title>
        <authorList>
            <person name="Huttlin E.L."/>
            <person name="Jedrychowski M.P."/>
            <person name="Elias J.E."/>
            <person name="Goswami T."/>
            <person name="Rad R."/>
            <person name="Beausoleil S.A."/>
            <person name="Villen J."/>
            <person name="Haas W."/>
            <person name="Sowa M.E."/>
            <person name="Gygi S.P."/>
        </authorList>
    </citation>
    <scope>PHOSPHORYLATION [LARGE SCALE ANALYSIS] AT THR-405</scope>
    <scope>IDENTIFICATION BY MASS SPECTROMETRY [LARGE SCALE ANALYSIS]</scope>
    <source>
        <tissue>Kidney</tissue>
        <tissue>Lung</tissue>
        <tissue>Spleen</tissue>
        <tissue>Testis</tissue>
    </source>
</reference>
<reference key="10">
    <citation type="journal article" date="2013" name="Cell Res.">
        <title>Early estrogen-induced gene 1, a novel RANK signaling component, is essential for osteoclastogenesis.</title>
        <authorList>
            <person name="Choi H.K."/>
            <person name="Kang H.R."/>
            <person name="Jung E."/>
            <person name="Kim T.E."/>
            <person name="Lin J.J."/>
            <person name="Lee S.Y."/>
        </authorList>
    </citation>
    <scope>IDENTIFICATION IN A COMPLEX WITH EEIG1; TNFRSF11A; PLCG2; TEC AND BTK</scope>
    <scope>SUBCELLULAR LOCATION</scope>
</reference>
<gene>
    <name type="primary">Gab2</name>
</gene>
<proteinExistence type="evidence at protein level"/>
<accession>Q9Z1S8</accession>
<accession>Q9R1X3</accession>
<dbReference type="EMBL" id="AF104244">
    <property type="protein sequence ID" value="AAD05166.1"/>
    <property type="molecule type" value="mRNA"/>
</dbReference>
<dbReference type="EMBL" id="AB018414">
    <property type="protein sequence ID" value="BAA76738.1"/>
    <property type="molecule type" value="mRNA"/>
</dbReference>
<dbReference type="CCDS" id="CCDS85340.1"/>
<dbReference type="SMR" id="Q9Z1S8"/>
<dbReference type="CORUM" id="Q9Z1S8"/>
<dbReference type="DIP" id="DIP-41351N"/>
<dbReference type="FunCoup" id="Q9Z1S8">
    <property type="interactions" value="448"/>
</dbReference>
<dbReference type="IntAct" id="Q9Z1S8">
    <property type="interactions" value="14"/>
</dbReference>
<dbReference type="MINT" id="Q9Z1S8"/>
<dbReference type="STRING" id="10090.ENSMUSP00000004622"/>
<dbReference type="GlyGen" id="Q9Z1S8">
    <property type="glycosylation" value="3 sites, 1 N-linked glycan (1 site), 1 O-linked glycan (2 sites)"/>
</dbReference>
<dbReference type="iPTMnet" id="Q9Z1S8"/>
<dbReference type="PhosphoSitePlus" id="Q9Z1S8"/>
<dbReference type="jPOST" id="Q9Z1S8"/>
<dbReference type="PaxDb" id="10090-ENSMUSP00000004622"/>
<dbReference type="ProteomicsDB" id="267415"/>
<dbReference type="Pumba" id="Q9Z1S8"/>
<dbReference type="AGR" id="MGI:1333854"/>
<dbReference type="MGI" id="MGI:1333854">
    <property type="gene designation" value="Gab2"/>
</dbReference>
<dbReference type="eggNOG" id="KOG3751">
    <property type="taxonomic scope" value="Eukaryota"/>
</dbReference>
<dbReference type="InParanoid" id="Q9Z1S8"/>
<dbReference type="PhylomeDB" id="Q9Z1S8"/>
<dbReference type="Reactome" id="R-MMU-109704">
    <property type="pathway name" value="PI3K Cascade"/>
</dbReference>
<dbReference type="Reactome" id="R-MMU-1257604">
    <property type="pathway name" value="PIP3 activates AKT signaling"/>
</dbReference>
<dbReference type="Reactome" id="R-MMU-1433557">
    <property type="pathway name" value="Signaling by SCF-KIT"/>
</dbReference>
<dbReference type="Reactome" id="R-MMU-2730905">
    <property type="pathway name" value="Role of LAT2/NTAL/LAB on calcium mobilization"/>
</dbReference>
<dbReference type="Reactome" id="R-MMU-6811558">
    <property type="pathway name" value="PI5P, PP2A and IER3 Regulate PI3K/AKT Signaling"/>
</dbReference>
<dbReference type="Reactome" id="R-MMU-8853659">
    <property type="pathway name" value="RET signaling"/>
</dbReference>
<dbReference type="Reactome" id="R-MMU-912526">
    <property type="pathway name" value="Interleukin receptor SHC signaling"/>
</dbReference>
<dbReference type="Reactome" id="R-MMU-9607240">
    <property type="pathway name" value="FLT3 Signaling"/>
</dbReference>
<dbReference type="Reactome" id="R-MMU-9674555">
    <property type="pathway name" value="Signaling by CSF3 (G-CSF)"/>
</dbReference>
<dbReference type="ChiTaRS" id="Gab2">
    <property type="organism name" value="mouse"/>
</dbReference>
<dbReference type="PRO" id="PR:Q9Z1S8"/>
<dbReference type="Proteomes" id="UP000000589">
    <property type="component" value="Unplaced"/>
</dbReference>
<dbReference type="RNAct" id="Q9Z1S8">
    <property type="molecule type" value="protein"/>
</dbReference>
<dbReference type="GO" id="GO:0005737">
    <property type="term" value="C:cytoplasm"/>
    <property type="evidence" value="ECO:0000250"/>
    <property type="project" value="UniProtKB"/>
</dbReference>
<dbReference type="GO" id="GO:0005829">
    <property type="term" value="C:cytosol"/>
    <property type="evidence" value="ECO:0000304"/>
    <property type="project" value="Reactome"/>
</dbReference>
<dbReference type="GO" id="GO:0045121">
    <property type="term" value="C:membrane raft"/>
    <property type="evidence" value="ECO:0000314"/>
    <property type="project" value="UniProtKB"/>
</dbReference>
<dbReference type="GO" id="GO:0005886">
    <property type="term" value="C:plasma membrane"/>
    <property type="evidence" value="ECO:0000250"/>
    <property type="project" value="UniProtKB"/>
</dbReference>
<dbReference type="GO" id="GO:0005547">
    <property type="term" value="F:phosphatidylinositol-3,4,5-trisphosphate binding"/>
    <property type="evidence" value="ECO:0000314"/>
    <property type="project" value="UniProtKB"/>
</dbReference>
<dbReference type="GO" id="GO:0043325">
    <property type="term" value="F:phosphatidylinositol-3,4-bisphosphate binding"/>
    <property type="evidence" value="ECO:0000314"/>
    <property type="project" value="UniProtKB"/>
</dbReference>
<dbReference type="GO" id="GO:0005068">
    <property type="term" value="F:transmembrane receptor protein tyrosine kinase adaptor activity"/>
    <property type="evidence" value="ECO:0000250"/>
    <property type="project" value="UniProtKB"/>
</dbReference>
<dbReference type="GO" id="GO:0016477">
    <property type="term" value="P:cell migration"/>
    <property type="evidence" value="ECO:0000314"/>
    <property type="project" value="MGI"/>
</dbReference>
<dbReference type="GO" id="GO:0007229">
    <property type="term" value="P:integrin-mediated signaling pathway"/>
    <property type="evidence" value="ECO:0000314"/>
    <property type="project" value="MGI"/>
</dbReference>
<dbReference type="GO" id="GO:0030316">
    <property type="term" value="P:osteoclast differentiation"/>
    <property type="evidence" value="ECO:0000315"/>
    <property type="project" value="UniProtKB"/>
</dbReference>
<dbReference type="GO" id="GO:0043491">
    <property type="term" value="P:phosphatidylinositol 3-kinase/protein kinase B signal transduction"/>
    <property type="evidence" value="ECO:0000315"/>
    <property type="project" value="UniProtKB"/>
</dbReference>
<dbReference type="GO" id="GO:0008284">
    <property type="term" value="P:positive regulation of cell population proliferation"/>
    <property type="evidence" value="ECO:0000250"/>
    <property type="project" value="UniProtKB"/>
</dbReference>
<dbReference type="GO" id="GO:0010634">
    <property type="term" value="P:positive regulation of epithelial cell migration"/>
    <property type="evidence" value="ECO:0000315"/>
    <property type="project" value="CACAO"/>
</dbReference>
<dbReference type="GO" id="GO:0043306">
    <property type="term" value="P:positive regulation of mast cell degranulation"/>
    <property type="evidence" value="ECO:0000315"/>
    <property type="project" value="UniProtKB"/>
</dbReference>
<dbReference type="FunFam" id="2.30.29.30:FF:000166">
    <property type="entry name" value="GRB2-associated-binding protein 1 isoform X1"/>
    <property type="match status" value="1"/>
</dbReference>
<dbReference type="Gene3D" id="2.30.29.30">
    <property type="entry name" value="Pleckstrin-homology domain (PH domain)/Phosphotyrosine-binding domain (PTB)"/>
    <property type="match status" value="1"/>
</dbReference>
<dbReference type="InterPro" id="IPR046355">
    <property type="entry name" value="Gab1-4-like"/>
</dbReference>
<dbReference type="InterPro" id="IPR011993">
    <property type="entry name" value="PH-like_dom_sf"/>
</dbReference>
<dbReference type="InterPro" id="IPR001849">
    <property type="entry name" value="PH_domain"/>
</dbReference>
<dbReference type="PANTHER" id="PTHR45960">
    <property type="entry name" value="GRB2-ASSOCIATED-BINDING PROTEIN"/>
    <property type="match status" value="1"/>
</dbReference>
<dbReference type="PANTHER" id="PTHR45960:SF1">
    <property type="entry name" value="GRB2-ASSOCIATED-BINDING PROTEIN 2"/>
    <property type="match status" value="1"/>
</dbReference>
<dbReference type="Pfam" id="PF00169">
    <property type="entry name" value="PH"/>
    <property type="match status" value="1"/>
</dbReference>
<dbReference type="SMART" id="SM00233">
    <property type="entry name" value="PH"/>
    <property type="match status" value="1"/>
</dbReference>
<dbReference type="SUPFAM" id="SSF50729">
    <property type="entry name" value="PH domain-like"/>
    <property type="match status" value="1"/>
</dbReference>
<dbReference type="PROSITE" id="PS50003">
    <property type="entry name" value="PH_DOMAIN"/>
    <property type="match status" value="1"/>
</dbReference>
<organism>
    <name type="scientific">Mus musculus</name>
    <name type="common">Mouse</name>
    <dbReference type="NCBI Taxonomy" id="10090"/>
    <lineage>
        <taxon>Eukaryota</taxon>
        <taxon>Metazoa</taxon>
        <taxon>Chordata</taxon>
        <taxon>Craniata</taxon>
        <taxon>Vertebrata</taxon>
        <taxon>Euteleostomi</taxon>
        <taxon>Mammalia</taxon>
        <taxon>Eutheria</taxon>
        <taxon>Euarchontoglires</taxon>
        <taxon>Glires</taxon>
        <taxon>Rodentia</taxon>
        <taxon>Myomorpha</taxon>
        <taxon>Muroidea</taxon>
        <taxon>Muridae</taxon>
        <taxon>Murinae</taxon>
        <taxon>Mus</taxon>
        <taxon>Mus</taxon>
    </lineage>
</organism>
<protein>
    <recommendedName>
        <fullName>GRB2-associated-binding protein 2</fullName>
    </recommendedName>
    <alternativeName>
        <fullName>GRB2-associated binder 2</fullName>
    </alternativeName>
    <alternativeName>
        <fullName>Growth factor receptor bound protein 2-associated protein 2</fullName>
    </alternativeName>
    <alternativeName>
        <fullName>PH domain-containing adaptor molecule p97</fullName>
    </alternativeName>
</protein>
<name>GAB2_MOUSE</name>
<evidence type="ECO:0000250" key="1"/>
<evidence type="ECO:0000250" key="2">
    <source>
        <dbReference type="UniProtKB" id="Q9UQC2"/>
    </source>
</evidence>
<evidence type="ECO:0000255" key="3">
    <source>
        <dbReference type="PROSITE-ProRule" id="PRU00145"/>
    </source>
</evidence>
<evidence type="ECO:0000256" key="4">
    <source>
        <dbReference type="SAM" id="MobiDB-lite"/>
    </source>
</evidence>
<evidence type="ECO:0000269" key="5">
    <source>
    </source>
</evidence>
<evidence type="ECO:0000269" key="6">
    <source>
    </source>
</evidence>
<evidence type="ECO:0000269" key="7">
    <source>
    </source>
</evidence>
<evidence type="ECO:0000269" key="8">
    <source>
    </source>
</evidence>
<evidence type="ECO:0000269" key="9">
    <source>
    </source>
</evidence>
<evidence type="ECO:0000269" key="10">
    <source>
    </source>
</evidence>
<evidence type="ECO:0000269" key="11">
    <source>
    </source>
</evidence>
<evidence type="ECO:0000269" key="12">
    <source>
    </source>
</evidence>
<evidence type="ECO:0000305" key="13"/>
<evidence type="ECO:0007744" key="14">
    <source>
    </source>
</evidence>
<evidence type="ECO:0007744" key="15">
    <source>
    </source>
</evidence>
<comment type="function">
    <text evidence="5 6 7 9 12">Adapter protein which acts downstream of several membrane receptors including cytokine, antigen, hormone, cell matrix and growth factor receptors to regulate multiple signaling pathways. Regulates osteoclast differentiation mediating the TNFRSF11A/RANK signaling (PubMed:15750601). In allergic response, it plays a role in mast cells activation and degranulation through PI-3-kinase regulation. Also involved in the regulation of cell proliferation and hematopoiesis.</text>
</comment>
<comment type="subunit">
    <text evidence="1 5 7 8 11 12">Part of a complex composed of EEIG1, TNFRSF11A/RANK, PLCG2, GAB2, TEC and BTK; complex formation increases in the presence of TNFSF11/RANKL (PubMed:23478294). Interacts with HCK (By similarity). Interacts with SHC1; may mediate interaction with receptors. Interacts with SYK. Interacts with PI-3 kinase. Interacts with GRB2 (via SH3 2 domain). Interacts (phosphorylated) with PTPN11. Interacts with TNFRSF11A (via cytoplasmic domain). Interacts (phosphorylated) with 14-3-3 family proteins SFN, YWHAB, YWHAE, YWHAG, YWHAH, YWHAQ and YWHAZ; prevents interaction with GRB2 and attenuates GAB2 signaling.</text>
</comment>
<comment type="interaction">
    <interactant intactId="EBI-641738">
        <id>Q9Z1S8</id>
    </interactant>
    <interactant intactId="EBI-643537">
        <id>P25911</id>
        <label>Lyn</label>
    </interactant>
    <organismsDiffer>false</organismsDiffer>
    <experiments>2</experiments>
</comment>
<comment type="interaction">
    <interactant intactId="EBI-641738">
        <id>Q9Z1S8</id>
    </interactant>
    <interactant intactId="EBI-2620699">
        <id>P29351</id>
        <label>Ptpn6</label>
    </interactant>
    <organismsDiffer>false</organismsDiffer>
    <experiments>2</experiments>
</comment>
<comment type="subcellular location">
    <subcellularLocation>
        <location evidence="2">Cytoplasm</location>
    </subcellularLocation>
    <subcellularLocation>
        <location evidence="2">Cell membrane</location>
    </subcellularLocation>
    <subcellularLocation>
        <location evidence="11">Membrane raft</location>
    </subcellularLocation>
</comment>
<comment type="tissue specificity">
    <text evidence="5 12">Ubiquitously expressed.</text>
</comment>
<comment type="domain">
    <text>The SH3-binding motifs mediate interaction with SHC1 and GRB2.</text>
</comment>
<comment type="domain">
    <text>The PH domain mediates phosphatidylinositol 3,4,5-trisphosphate and phosphatidylinositol 3,4-bisphosphate binding.</text>
</comment>
<comment type="PTM">
    <text evidence="1 5 7 10 12">Phosphorylated upon EGF stimulation. Phosphorylated on tyrosine residues by HCK upon IL6 signaling (By similarity). Phosphorylated on tyrosine residue(s) by the thrombopoietin receptor (TPOR), stem cell factor receptor (SCFR), and T-cell and B-cell antigen receptors, gp130, IL-2R and IL-3R. Phosphorylated upon stimulation of TNFRSF11A/RANK by TNFSF11/RANKL.</text>
</comment>
<comment type="PTM">
    <text>Dephosphorylated by PTPN11.</text>
</comment>
<comment type="disruption phenotype">
    <text evidence="6 7">Mice are viable and healthy for up to 15 months. However, they have reduced number of mast cells and develop osteopetrosis.</text>
</comment>
<comment type="similarity">
    <text evidence="13">Belongs to the GAB family.</text>
</comment>